<dbReference type="EC" id="3.2.2.22"/>
<dbReference type="EMBL" id="X57682">
    <property type="protein sequence ID" value="CAA40869.1"/>
    <property type="molecule type" value="mRNA"/>
</dbReference>
<dbReference type="PIR" id="S14273">
    <property type="entry name" value="RLPUGG"/>
</dbReference>
<dbReference type="RefSeq" id="NP_001406540.1">
    <property type="nucleotide sequence ID" value="NM_001419611.1"/>
</dbReference>
<dbReference type="PDB" id="1AHA">
    <property type="method" value="X-ray"/>
    <property type="resolution" value="2.20 A"/>
    <property type="chains" value="A=24-269"/>
</dbReference>
<dbReference type="PDB" id="1AHB">
    <property type="method" value="X-ray"/>
    <property type="resolution" value="2.20 A"/>
    <property type="chains" value="A=24-269"/>
</dbReference>
<dbReference type="PDB" id="1AHC">
    <property type="method" value="X-ray"/>
    <property type="resolution" value="2.00 A"/>
    <property type="chains" value="A=24-269"/>
</dbReference>
<dbReference type="PDB" id="1F8Q">
    <property type="method" value="X-ray"/>
    <property type="resolution" value="2.20 A"/>
    <property type="chains" value="A=24-286"/>
</dbReference>
<dbReference type="PDB" id="1MOM">
    <property type="method" value="X-ray"/>
    <property type="resolution" value="2.16 A"/>
    <property type="chains" value="A=24-269"/>
</dbReference>
<dbReference type="PDB" id="1MRG">
    <property type="method" value="X-ray"/>
    <property type="resolution" value="1.80 A"/>
    <property type="chains" value="A=24-286"/>
</dbReference>
<dbReference type="PDB" id="1MRH">
    <property type="method" value="X-ray"/>
    <property type="resolution" value="2.00 A"/>
    <property type="chains" value="A=24-286"/>
</dbReference>
<dbReference type="PDB" id="1MRI">
    <property type="method" value="X-ray"/>
    <property type="resolution" value="2.20 A"/>
    <property type="chains" value="A=24-286"/>
</dbReference>
<dbReference type="PDB" id="4YP2">
    <property type="method" value="X-ray"/>
    <property type="resolution" value="1.35 A"/>
    <property type="chains" value="B=24-269"/>
</dbReference>
<dbReference type="PDB" id="5CF9">
    <property type="method" value="X-ray"/>
    <property type="resolution" value="1.52 A"/>
    <property type="chains" value="B=24-269"/>
</dbReference>
<dbReference type="PDB" id="6LOQ">
    <property type="method" value="X-ray"/>
    <property type="resolution" value="1.33 A"/>
    <property type="chains" value="A=1-286"/>
</dbReference>
<dbReference type="PDB" id="6LOR">
    <property type="method" value="X-ray"/>
    <property type="resolution" value="1.35 A"/>
    <property type="chains" value="A=1-286"/>
</dbReference>
<dbReference type="PDB" id="6LOV">
    <property type="method" value="X-ray"/>
    <property type="resolution" value="1.35 A"/>
    <property type="chains" value="A=1-286"/>
</dbReference>
<dbReference type="PDB" id="6LOW">
    <property type="method" value="X-ray"/>
    <property type="resolution" value="1.39 A"/>
    <property type="chains" value="A=1-286"/>
</dbReference>
<dbReference type="PDB" id="6LOY">
    <property type="method" value="X-ray"/>
    <property type="resolution" value="1.35 A"/>
    <property type="chains" value="A=1-286"/>
</dbReference>
<dbReference type="PDB" id="6LOZ">
    <property type="method" value="X-ray"/>
    <property type="resolution" value="1.08 A"/>
    <property type="chains" value="A=1-286"/>
</dbReference>
<dbReference type="PDB" id="6LP0">
    <property type="method" value="X-ray"/>
    <property type="resolution" value="1.52 A"/>
    <property type="chains" value="A=1-286"/>
</dbReference>
<dbReference type="PDBsum" id="1AHA"/>
<dbReference type="PDBsum" id="1AHB"/>
<dbReference type="PDBsum" id="1AHC"/>
<dbReference type="PDBsum" id="1F8Q"/>
<dbReference type="PDBsum" id="1MOM"/>
<dbReference type="PDBsum" id="1MRG"/>
<dbReference type="PDBsum" id="1MRH"/>
<dbReference type="PDBsum" id="1MRI"/>
<dbReference type="PDBsum" id="4YP2"/>
<dbReference type="PDBsum" id="5CF9"/>
<dbReference type="PDBsum" id="6LOQ"/>
<dbReference type="PDBsum" id="6LOR"/>
<dbReference type="PDBsum" id="6LOV"/>
<dbReference type="PDBsum" id="6LOW"/>
<dbReference type="PDBsum" id="6LOY"/>
<dbReference type="PDBsum" id="6LOZ"/>
<dbReference type="PDBsum" id="6LP0"/>
<dbReference type="SMR" id="P16094"/>
<dbReference type="Allergome" id="2800">
    <property type="allergen name" value="Mom c RIP"/>
</dbReference>
<dbReference type="GlyConnect" id="535">
    <property type="glycosylation" value="3 N-Linked glycans (1 site)"/>
</dbReference>
<dbReference type="GeneID" id="111023551"/>
<dbReference type="OrthoDB" id="1704365at2759"/>
<dbReference type="BRENDA" id="3.2.2.22">
    <property type="organism ID" value="3398"/>
</dbReference>
<dbReference type="EvolutionaryTrace" id="P16094"/>
<dbReference type="Proteomes" id="UP000504603">
    <property type="component" value="Unplaced"/>
</dbReference>
<dbReference type="GO" id="GO:0030598">
    <property type="term" value="F:rRNA N-glycosylase activity"/>
    <property type="evidence" value="ECO:0007669"/>
    <property type="project" value="UniProtKB-EC"/>
</dbReference>
<dbReference type="GO" id="GO:0090729">
    <property type="term" value="F:toxin activity"/>
    <property type="evidence" value="ECO:0007669"/>
    <property type="project" value="UniProtKB-KW"/>
</dbReference>
<dbReference type="GO" id="GO:0006952">
    <property type="term" value="P:defense response"/>
    <property type="evidence" value="ECO:0007669"/>
    <property type="project" value="UniProtKB-KW"/>
</dbReference>
<dbReference type="GO" id="GO:0017148">
    <property type="term" value="P:negative regulation of translation"/>
    <property type="evidence" value="ECO:0007669"/>
    <property type="project" value="UniProtKB-KW"/>
</dbReference>
<dbReference type="Gene3D" id="3.40.420.10">
    <property type="entry name" value="Ricin (A subunit), domain 1"/>
    <property type="match status" value="1"/>
</dbReference>
<dbReference type="Gene3D" id="4.10.470.10">
    <property type="entry name" value="Ricin (A Subunit), domain 2"/>
    <property type="match status" value="1"/>
</dbReference>
<dbReference type="InterPro" id="IPR036041">
    <property type="entry name" value="Ribosome-inact_prot_sf"/>
</dbReference>
<dbReference type="InterPro" id="IPR017989">
    <property type="entry name" value="Ribosome_inactivat_1/2"/>
</dbReference>
<dbReference type="InterPro" id="IPR001574">
    <property type="entry name" value="Ribosome_inactivat_prot"/>
</dbReference>
<dbReference type="InterPro" id="IPR017988">
    <property type="entry name" value="Ribosome_inactivat_prot_CS"/>
</dbReference>
<dbReference type="InterPro" id="IPR016138">
    <property type="entry name" value="Ribosome_inactivat_prot_sub1"/>
</dbReference>
<dbReference type="InterPro" id="IPR016139">
    <property type="entry name" value="Ribosome_inactivat_prot_sub2"/>
</dbReference>
<dbReference type="PANTHER" id="PTHR33453">
    <property type="match status" value="1"/>
</dbReference>
<dbReference type="PANTHER" id="PTHR33453:SF34">
    <property type="entry name" value="RIBOSOME-INACTIVATING PROTEIN"/>
    <property type="match status" value="1"/>
</dbReference>
<dbReference type="Pfam" id="PF00161">
    <property type="entry name" value="RIP"/>
    <property type="match status" value="1"/>
</dbReference>
<dbReference type="PRINTS" id="PR00396">
    <property type="entry name" value="SHIGARICIN"/>
</dbReference>
<dbReference type="SUPFAM" id="SSF56371">
    <property type="entry name" value="Ribosome inactivating proteins (RIP)"/>
    <property type="match status" value="1"/>
</dbReference>
<dbReference type="PROSITE" id="PS00275">
    <property type="entry name" value="SHIGA_RICIN"/>
    <property type="match status" value="1"/>
</dbReference>
<comment type="catalytic activity">
    <reaction>
        <text>Endohydrolysis of the N-glycosidic bond at one specific adenosine on the 28S rRNA.</text>
        <dbReference type="EC" id="3.2.2.22"/>
    </reaction>
</comment>
<comment type="similarity">
    <text evidence="3">Belongs to the ribosome-inactivating protein family. Type 1 RIP subfamily.</text>
</comment>
<keyword id="KW-0002">3D-structure</keyword>
<keyword id="KW-0903">Direct protein sequencing</keyword>
<keyword id="KW-0325">Glycoprotein</keyword>
<keyword id="KW-0378">Hydrolase</keyword>
<keyword id="KW-0611">Plant defense</keyword>
<keyword id="KW-0652">Protein synthesis inhibitor</keyword>
<keyword id="KW-1185">Reference proteome</keyword>
<keyword id="KW-0732">Signal</keyword>
<keyword id="KW-0800">Toxin</keyword>
<reference key="1">
    <citation type="journal article" date="1991" name="Biochim. Biophys. Acta">
        <title>Cloning of the cDNA of alpha-momorcharin: a ribosome inactivating protein.</title>
        <authorList>
            <person name="Ho W.K.K."/>
            <person name="Liu S.C."/>
            <person name="Shaw P.C."/>
            <person name="Yeung H.W."/>
            <person name="Ng T.B."/>
            <person name="Chan W.Y."/>
        </authorList>
    </citation>
    <scope>NUCLEOTIDE SEQUENCE [MRNA]</scope>
    <source>
        <tissue>Seed</tissue>
    </source>
</reference>
<reference key="2">
    <citation type="journal article" date="1989" name="Int. J. Pept. Protein Res.">
        <title>N-terminal sequence of some ribosome-inactivating proteins.</title>
        <authorList>
            <person name="Montecucchi P.-C."/>
            <person name="Lazzarini A.M."/>
            <person name="Barbieri L."/>
            <person name="Stirpe F."/>
            <person name="Soria M."/>
            <person name="Lappi D."/>
        </authorList>
    </citation>
    <scope>PROTEIN SEQUENCE OF 24-38</scope>
    <source>
        <tissue>Seed</tissue>
    </source>
</reference>
<reference key="3">
    <citation type="journal article" date="1988" name="Eur. J. Biochem.">
        <title>Trichokirin, a ribosome-inactivating protein from the seeds of Trichosanthes kirilowii Maximowicz. Purification, partial characterization and use for preparation of immunotoxins.</title>
        <authorList>
            <person name="Casellas P."/>
            <person name="Dussossoy D."/>
            <person name="Falasca A.I."/>
            <person name="Barbieri L."/>
            <person name="Guillemot J.-C."/>
            <person name="Ferrara P."/>
            <person name="Bolognesi A."/>
            <person name="Cenini P."/>
            <person name="Stirpe F."/>
        </authorList>
    </citation>
    <scope>PROTEIN SEQUENCE OF 24-70</scope>
    <source>
        <tissue>Seed</tissue>
    </source>
</reference>
<reference key="4">
    <citation type="journal article" date="1994" name="Structure">
        <title>The N-glycosidase mechanism of ribosome-inactivating proteins implied by crystal structures of alpha-momorcharin.</title>
        <authorList>
            <person name="Ren J."/>
            <person name="Wang Y."/>
            <person name="Dong Y."/>
            <person name="Stuart D.I."/>
        </authorList>
    </citation>
    <scope>X-RAY CRYSTALLOGRAPHY (2.2 ANGSTROMS)</scope>
</reference>
<reference key="5">
    <citation type="journal article" date="1994" name="FEBS Lett.">
        <title>Crystal structure of momordin, a type I ribosome inactivating protein from the seeds of Momordica charantia.</title>
        <authorList>
            <person name="Husain J."/>
            <person name="Tickle I.J."/>
            <person name="Wood S.P."/>
        </authorList>
    </citation>
    <scope>X-RAY CRYSTALLOGRAPHY (2.16 ANGSTROMS)</scope>
</reference>
<reference key="6">
    <citation type="journal article" date="1995" name="Biochem. J.">
        <title>Studies on crystal structures, active-centre geometry and depurinating mechanism of two ribosome-inactivating proteins.</title>
        <authorList>
            <person name="Huang Q."/>
            <person name="Liu S."/>
            <person name="Tang Y."/>
            <person name="Jin S."/>
            <person name="Wang Y."/>
        </authorList>
    </citation>
    <scope>X-RAY CRYSTALLOGRAPHY (2.0 ANGSTROMS)</scope>
</reference>
<sequence>MSRFSVLSFLILAIFLGGSIVKGDVSFRLSGADPRSYGMFIKDLRNALPFREKVYNIPLLLPSVSGAGRYLLMHLFNYDGKTITVAVDVTNVYIMGYLADTTSYFFNEPAAELASQYVFRDARRKITLPYSGNYERLQIAAGKPREKIPIGLPALDSAISTLLHYDSTAAAGALLVLIQTTAEAARFKYIEQQIQERAYRDEVPSLATISLENSWSGLSKQIQLAQGNNGIFRTPIVLVDNKGNRVQITNVTSKVVTSNIQLLLNTRNIAEGDNGDVSTTHGFSSY</sequence>
<evidence type="ECO:0000269" key="1">
    <source>
    </source>
</evidence>
<evidence type="ECO:0000269" key="2">
    <source>
    </source>
</evidence>
<evidence type="ECO:0000305" key="3"/>
<evidence type="ECO:0007829" key="4">
    <source>
        <dbReference type="PDB" id="1MRG"/>
    </source>
</evidence>
<evidence type="ECO:0007829" key="5">
    <source>
        <dbReference type="PDB" id="6LOQ"/>
    </source>
</evidence>
<evidence type="ECO:0007829" key="6">
    <source>
        <dbReference type="PDB" id="6LOZ"/>
    </source>
</evidence>
<name>RIP1_MOMCH</name>
<organism>
    <name type="scientific">Momordica charantia</name>
    <name type="common">Bitter gourd</name>
    <name type="synonym">Balsam pear</name>
    <dbReference type="NCBI Taxonomy" id="3673"/>
    <lineage>
        <taxon>Eukaryota</taxon>
        <taxon>Viridiplantae</taxon>
        <taxon>Streptophyta</taxon>
        <taxon>Embryophyta</taxon>
        <taxon>Tracheophyta</taxon>
        <taxon>Spermatophyta</taxon>
        <taxon>Magnoliopsida</taxon>
        <taxon>eudicotyledons</taxon>
        <taxon>Gunneridae</taxon>
        <taxon>Pentapetalae</taxon>
        <taxon>rosids</taxon>
        <taxon>fabids</taxon>
        <taxon>Cucurbitales</taxon>
        <taxon>Cucurbitaceae</taxon>
        <taxon>Momordiceae</taxon>
        <taxon>Momordica</taxon>
    </lineage>
</organism>
<accession>P16094</accession>
<accession>P24697</accession>
<protein>
    <recommendedName>
        <fullName>Ribosome-inactivating protein momordin I</fullName>
        <ecNumber>3.2.2.22</ecNumber>
    </recommendedName>
    <alternativeName>
        <fullName>Alpha-momorcharin</fullName>
        <shortName>Alpha-MMC</shortName>
    </alternativeName>
    <alternativeName>
        <fullName>rRNA N-glycosidase</fullName>
    </alternativeName>
</protein>
<feature type="signal peptide" evidence="1 2">
    <location>
        <begin position="1"/>
        <end position="23"/>
    </location>
</feature>
<feature type="chain" id="PRO_0000030770" description="Ribosome-inactivating protein momordin I">
    <location>
        <begin position="24"/>
        <end position="269"/>
    </location>
</feature>
<feature type="propeptide" id="PRO_0000030771" description="Removed in mature form">
    <location>
        <begin position="270"/>
        <end position="286"/>
    </location>
</feature>
<feature type="active site">
    <location>
        <position position="183"/>
    </location>
</feature>
<feature type="glycosylation site" id="CAR_000082" description="N-linked (GlcNAc...) asparagine">
    <location>
        <position position="250"/>
    </location>
</feature>
<feature type="strand" evidence="6">
    <location>
        <begin position="25"/>
        <end position="29"/>
    </location>
</feature>
<feature type="helix" evidence="6">
    <location>
        <begin position="34"/>
        <end position="46"/>
    </location>
</feature>
<feature type="strand" evidence="6">
    <location>
        <begin position="50"/>
        <end position="54"/>
    </location>
</feature>
<feature type="strand" evidence="6">
    <location>
        <begin position="57"/>
        <end position="60"/>
    </location>
</feature>
<feature type="helix" evidence="6">
    <location>
        <begin position="66"/>
        <end position="69"/>
    </location>
</feature>
<feature type="strand" evidence="6">
    <location>
        <begin position="70"/>
        <end position="76"/>
    </location>
</feature>
<feature type="strand" evidence="6">
    <location>
        <begin position="82"/>
        <end position="88"/>
    </location>
</feature>
<feature type="turn" evidence="6">
    <location>
        <begin position="89"/>
        <end position="91"/>
    </location>
</feature>
<feature type="strand" evidence="6">
    <location>
        <begin position="94"/>
        <end position="99"/>
    </location>
</feature>
<feature type="strand" evidence="6">
    <location>
        <begin position="102"/>
        <end position="105"/>
    </location>
</feature>
<feature type="helix" evidence="6">
    <location>
        <begin position="109"/>
        <end position="114"/>
    </location>
</feature>
<feature type="turn" evidence="6">
    <location>
        <begin position="115"/>
        <end position="117"/>
    </location>
</feature>
<feature type="strand" evidence="6">
    <location>
        <begin position="122"/>
        <end position="127"/>
    </location>
</feature>
<feature type="helix" evidence="6">
    <location>
        <begin position="134"/>
        <end position="141"/>
    </location>
</feature>
<feature type="helix" evidence="6">
    <location>
        <begin position="145"/>
        <end position="147"/>
    </location>
</feature>
<feature type="helix" evidence="6">
    <location>
        <begin position="152"/>
        <end position="162"/>
    </location>
</feature>
<feature type="helix" evidence="6">
    <location>
        <begin position="167"/>
        <end position="180"/>
    </location>
</feature>
<feature type="helix" evidence="6">
    <location>
        <begin position="182"/>
        <end position="186"/>
    </location>
</feature>
<feature type="helix" evidence="6">
    <location>
        <begin position="188"/>
        <end position="196"/>
    </location>
</feature>
<feature type="strand" evidence="6">
    <location>
        <begin position="198"/>
        <end position="200"/>
    </location>
</feature>
<feature type="helix" evidence="6">
    <location>
        <begin position="206"/>
        <end position="225"/>
    </location>
</feature>
<feature type="turn" evidence="6">
    <location>
        <begin position="226"/>
        <end position="230"/>
    </location>
</feature>
<feature type="strand" evidence="6">
    <location>
        <begin position="231"/>
        <end position="239"/>
    </location>
</feature>
<feature type="strand" evidence="4">
    <location>
        <begin position="242"/>
        <end position="244"/>
    </location>
</feature>
<feature type="strand" evidence="6">
    <location>
        <begin position="245"/>
        <end position="250"/>
    </location>
</feature>
<feature type="helix" evidence="6">
    <location>
        <begin position="254"/>
        <end position="257"/>
    </location>
</feature>
<feature type="helix" evidence="5">
    <location>
        <begin position="266"/>
        <end position="268"/>
    </location>
</feature>
<proteinExistence type="evidence at protein level"/>